<proteinExistence type="inferred from homology"/>
<keyword id="KW-0694">RNA-binding</keyword>
<keyword id="KW-0804">Transcription</keyword>
<keyword id="KW-0889">Transcription antitermination</keyword>
<keyword id="KW-0805">Transcription regulation</keyword>
<organism>
    <name type="scientific">Chlamydia muridarum (strain MoPn / Nigg)</name>
    <dbReference type="NCBI Taxonomy" id="243161"/>
    <lineage>
        <taxon>Bacteria</taxon>
        <taxon>Pseudomonadati</taxon>
        <taxon>Chlamydiota</taxon>
        <taxon>Chlamydiia</taxon>
        <taxon>Chlamydiales</taxon>
        <taxon>Chlamydiaceae</taxon>
        <taxon>Chlamydia/Chlamydophila group</taxon>
        <taxon>Chlamydia</taxon>
    </lineage>
</organism>
<reference key="1">
    <citation type="journal article" date="2000" name="Nucleic Acids Res.">
        <title>Genome sequences of Chlamydia trachomatis MoPn and Chlamydia pneumoniae AR39.</title>
        <authorList>
            <person name="Read T.D."/>
            <person name="Brunham R.C."/>
            <person name="Shen C."/>
            <person name="Gill S.R."/>
            <person name="Heidelberg J.F."/>
            <person name="White O."/>
            <person name="Hickey E.K."/>
            <person name="Peterson J.D."/>
            <person name="Utterback T.R."/>
            <person name="Berry K.J."/>
            <person name="Bass S."/>
            <person name="Linher K.D."/>
            <person name="Weidman J.F."/>
            <person name="Khouri H.M."/>
            <person name="Craven B."/>
            <person name="Bowman C."/>
            <person name="Dodson R.J."/>
            <person name="Gwinn M.L."/>
            <person name="Nelson W.C."/>
            <person name="DeBoy R.T."/>
            <person name="Kolonay J.F."/>
            <person name="McClarty G."/>
            <person name="Salzberg S.L."/>
            <person name="Eisen J.A."/>
            <person name="Fraser C.M."/>
        </authorList>
    </citation>
    <scope>NUCLEOTIDE SEQUENCE [LARGE SCALE GENOMIC DNA]</scope>
    <source>
        <strain>MoPn / Nigg</strain>
    </source>
</reference>
<protein>
    <recommendedName>
        <fullName evidence="1">Transcription antitermination protein NusB</fullName>
    </recommendedName>
    <alternativeName>
        <fullName evidence="1">Antitermination factor NusB</fullName>
    </alternativeName>
</protein>
<feature type="chain" id="PRO_0000176524" description="Transcription antitermination protein NusB">
    <location>
        <begin position="1"/>
        <end position="164"/>
    </location>
</feature>
<sequence length="164" mass="18055">MIMSVMASDSARAVVCTSRPFPKQKLRELVLQALYALEMAPKGEDSLVSLLMTEASVSKKNVLYALMFCKAIRANQSELDALLNATIRTTTLANLTIIERNILRMMLFEHQQNQESSPIPTAVLIAETTRLIKKFSYVEGSSLILAVLGSIFDQVAQEPASMCG</sequence>
<comment type="function">
    <text evidence="1">Involved in transcription antitermination. Required for transcription of ribosomal RNA (rRNA) genes. Binds specifically to the boxA antiterminator sequence of the ribosomal RNA (rrn) operons.</text>
</comment>
<comment type="similarity">
    <text evidence="1 2">Belongs to the NusB family.</text>
</comment>
<dbReference type="EMBL" id="AE002160">
    <property type="protein sequence ID" value="AAF39091.1"/>
    <property type="molecule type" value="Genomic_DNA"/>
</dbReference>
<dbReference type="PIR" id="A81727">
    <property type="entry name" value="A81727"/>
</dbReference>
<dbReference type="SMR" id="Q9PL88"/>
<dbReference type="KEGG" id="cmu:TC_0219"/>
<dbReference type="eggNOG" id="COG0781">
    <property type="taxonomic scope" value="Bacteria"/>
</dbReference>
<dbReference type="HOGENOM" id="CLU_087843_3_3_0"/>
<dbReference type="Proteomes" id="UP000000800">
    <property type="component" value="Chromosome"/>
</dbReference>
<dbReference type="GO" id="GO:0005829">
    <property type="term" value="C:cytosol"/>
    <property type="evidence" value="ECO:0007669"/>
    <property type="project" value="TreeGrafter"/>
</dbReference>
<dbReference type="GO" id="GO:0003723">
    <property type="term" value="F:RNA binding"/>
    <property type="evidence" value="ECO:0007669"/>
    <property type="project" value="UniProtKB-UniRule"/>
</dbReference>
<dbReference type="GO" id="GO:0006353">
    <property type="term" value="P:DNA-templated transcription termination"/>
    <property type="evidence" value="ECO:0007669"/>
    <property type="project" value="UniProtKB-UniRule"/>
</dbReference>
<dbReference type="GO" id="GO:0031564">
    <property type="term" value="P:transcription antitermination"/>
    <property type="evidence" value="ECO:0007669"/>
    <property type="project" value="UniProtKB-KW"/>
</dbReference>
<dbReference type="CDD" id="cd00619">
    <property type="entry name" value="Terminator_NusB"/>
    <property type="match status" value="1"/>
</dbReference>
<dbReference type="Gene3D" id="1.10.940.10">
    <property type="entry name" value="NusB-like"/>
    <property type="match status" value="1"/>
</dbReference>
<dbReference type="HAMAP" id="MF_00073">
    <property type="entry name" value="NusB"/>
    <property type="match status" value="1"/>
</dbReference>
<dbReference type="InterPro" id="IPR035926">
    <property type="entry name" value="NusB-like_sf"/>
</dbReference>
<dbReference type="InterPro" id="IPR011605">
    <property type="entry name" value="NusB_fam"/>
</dbReference>
<dbReference type="InterPro" id="IPR006027">
    <property type="entry name" value="NusB_RsmB_TIM44"/>
</dbReference>
<dbReference type="NCBIfam" id="TIGR01951">
    <property type="entry name" value="nusB"/>
    <property type="match status" value="1"/>
</dbReference>
<dbReference type="NCBIfam" id="NF001230">
    <property type="entry name" value="PRK00202.2-5"/>
    <property type="match status" value="1"/>
</dbReference>
<dbReference type="PANTHER" id="PTHR11078:SF3">
    <property type="entry name" value="ANTITERMINATION NUSB DOMAIN-CONTAINING PROTEIN"/>
    <property type="match status" value="1"/>
</dbReference>
<dbReference type="PANTHER" id="PTHR11078">
    <property type="entry name" value="N UTILIZATION SUBSTANCE PROTEIN B-RELATED"/>
    <property type="match status" value="1"/>
</dbReference>
<dbReference type="Pfam" id="PF01029">
    <property type="entry name" value="NusB"/>
    <property type="match status" value="1"/>
</dbReference>
<dbReference type="SUPFAM" id="SSF48013">
    <property type="entry name" value="NusB-like"/>
    <property type="match status" value="1"/>
</dbReference>
<evidence type="ECO:0000255" key="1">
    <source>
        <dbReference type="HAMAP-Rule" id="MF_00073"/>
    </source>
</evidence>
<evidence type="ECO:0000305" key="2"/>
<name>NUSB_CHLMU</name>
<accession>Q9PL88</accession>
<gene>
    <name evidence="1" type="primary">nusB</name>
    <name type="ordered locus">TC_0219</name>
</gene>